<dbReference type="EC" id="5.4.2.10" evidence="1"/>
<dbReference type="EMBL" id="FM180568">
    <property type="protein sequence ID" value="CAS11003.1"/>
    <property type="molecule type" value="Genomic_DNA"/>
</dbReference>
<dbReference type="RefSeq" id="WP_000071137.1">
    <property type="nucleotide sequence ID" value="NC_011601.1"/>
</dbReference>
<dbReference type="SMR" id="B7UJ69"/>
<dbReference type="GeneID" id="93778805"/>
<dbReference type="KEGG" id="ecg:E2348C_3455"/>
<dbReference type="HOGENOM" id="CLU_016950_7_0_6"/>
<dbReference type="Proteomes" id="UP000008205">
    <property type="component" value="Chromosome"/>
</dbReference>
<dbReference type="GO" id="GO:0005829">
    <property type="term" value="C:cytosol"/>
    <property type="evidence" value="ECO:0007669"/>
    <property type="project" value="TreeGrafter"/>
</dbReference>
<dbReference type="GO" id="GO:0000287">
    <property type="term" value="F:magnesium ion binding"/>
    <property type="evidence" value="ECO:0007669"/>
    <property type="project" value="UniProtKB-UniRule"/>
</dbReference>
<dbReference type="GO" id="GO:0008966">
    <property type="term" value="F:phosphoglucosamine mutase activity"/>
    <property type="evidence" value="ECO:0007669"/>
    <property type="project" value="UniProtKB-UniRule"/>
</dbReference>
<dbReference type="GO" id="GO:0004615">
    <property type="term" value="F:phosphomannomutase activity"/>
    <property type="evidence" value="ECO:0007669"/>
    <property type="project" value="TreeGrafter"/>
</dbReference>
<dbReference type="GO" id="GO:0005975">
    <property type="term" value="P:carbohydrate metabolic process"/>
    <property type="evidence" value="ECO:0007669"/>
    <property type="project" value="InterPro"/>
</dbReference>
<dbReference type="GO" id="GO:0009252">
    <property type="term" value="P:peptidoglycan biosynthetic process"/>
    <property type="evidence" value="ECO:0007669"/>
    <property type="project" value="TreeGrafter"/>
</dbReference>
<dbReference type="GO" id="GO:0006048">
    <property type="term" value="P:UDP-N-acetylglucosamine biosynthetic process"/>
    <property type="evidence" value="ECO:0007669"/>
    <property type="project" value="TreeGrafter"/>
</dbReference>
<dbReference type="CDD" id="cd05802">
    <property type="entry name" value="GlmM"/>
    <property type="match status" value="1"/>
</dbReference>
<dbReference type="FunFam" id="3.30.310.50:FF:000001">
    <property type="entry name" value="Phosphoglucosamine mutase"/>
    <property type="match status" value="1"/>
</dbReference>
<dbReference type="FunFam" id="3.40.120.10:FF:000001">
    <property type="entry name" value="Phosphoglucosamine mutase"/>
    <property type="match status" value="1"/>
</dbReference>
<dbReference type="FunFam" id="3.40.120.10:FF:000002">
    <property type="entry name" value="Phosphoglucosamine mutase"/>
    <property type="match status" value="1"/>
</dbReference>
<dbReference type="Gene3D" id="3.40.120.10">
    <property type="entry name" value="Alpha-D-Glucose-1,6-Bisphosphate, subunit A, domain 3"/>
    <property type="match status" value="3"/>
</dbReference>
<dbReference type="Gene3D" id="3.30.310.50">
    <property type="entry name" value="Alpha-D-phosphohexomutase, C-terminal domain"/>
    <property type="match status" value="1"/>
</dbReference>
<dbReference type="HAMAP" id="MF_01554_B">
    <property type="entry name" value="GlmM_B"/>
    <property type="match status" value="1"/>
</dbReference>
<dbReference type="InterPro" id="IPR005844">
    <property type="entry name" value="A-D-PHexomutase_a/b/a-I"/>
</dbReference>
<dbReference type="InterPro" id="IPR016055">
    <property type="entry name" value="A-D-PHexomutase_a/b/a-I/II/III"/>
</dbReference>
<dbReference type="InterPro" id="IPR005845">
    <property type="entry name" value="A-D-PHexomutase_a/b/a-II"/>
</dbReference>
<dbReference type="InterPro" id="IPR005846">
    <property type="entry name" value="A-D-PHexomutase_a/b/a-III"/>
</dbReference>
<dbReference type="InterPro" id="IPR005843">
    <property type="entry name" value="A-D-PHexomutase_C"/>
</dbReference>
<dbReference type="InterPro" id="IPR036900">
    <property type="entry name" value="A-D-PHexomutase_C_sf"/>
</dbReference>
<dbReference type="InterPro" id="IPR016066">
    <property type="entry name" value="A-D-PHexomutase_CS"/>
</dbReference>
<dbReference type="InterPro" id="IPR005841">
    <property type="entry name" value="Alpha-D-phosphohexomutase_SF"/>
</dbReference>
<dbReference type="InterPro" id="IPR006352">
    <property type="entry name" value="GlmM_bact"/>
</dbReference>
<dbReference type="InterPro" id="IPR050060">
    <property type="entry name" value="Phosphoglucosamine_mutase"/>
</dbReference>
<dbReference type="NCBIfam" id="TIGR01455">
    <property type="entry name" value="glmM"/>
    <property type="match status" value="1"/>
</dbReference>
<dbReference type="NCBIfam" id="NF008139">
    <property type="entry name" value="PRK10887.1"/>
    <property type="match status" value="1"/>
</dbReference>
<dbReference type="PANTHER" id="PTHR42946:SF1">
    <property type="entry name" value="PHOSPHOGLUCOMUTASE (ALPHA-D-GLUCOSE-1,6-BISPHOSPHATE-DEPENDENT)"/>
    <property type="match status" value="1"/>
</dbReference>
<dbReference type="PANTHER" id="PTHR42946">
    <property type="entry name" value="PHOSPHOHEXOSE MUTASE"/>
    <property type="match status" value="1"/>
</dbReference>
<dbReference type="Pfam" id="PF02878">
    <property type="entry name" value="PGM_PMM_I"/>
    <property type="match status" value="1"/>
</dbReference>
<dbReference type="Pfam" id="PF02879">
    <property type="entry name" value="PGM_PMM_II"/>
    <property type="match status" value="1"/>
</dbReference>
<dbReference type="Pfam" id="PF02880">
    <property type="entry name" value="PGM_PMM_III"/>
    <property type="match status" value="1"/>
</dbReference>
<dbReference type="Pfam" id="PF00408">
    <property type="entry name" value="PGM_PMM_IV"/>
    <property type="match status" value="1"/>
</dbReference>
<dbReference type="PRINTS" id="PR00509">
    <property type="entry name" value="PGMPMM"/>
</dbReference>
<dbReference type="SUPFAM" id="SSF55957">
    <property type="entry name" value="Phosphoglucomutase, C-terminal domain"/>
    <property type="match status" value="1"/>
</dbReference>
<dbReference type="SUPFAM" id="SSF53738">
    <property type="entry name" value="Phosphoglucomutase, first 3 domains"/>
    <property type="match status" value="3"/>
</dbReference>
<dbReference type="PROSITE" id="PS00710">
    <property type="entry name" value="PGM_PMM"/>
    <property type="match status" value="1"/>
</dbReference>
<gene>
    <name evidence="1" type="primary">glmM</name>
    <name type="ordered locus">E2348C_3455</name>
</gene>
<reference key="1">
    <citation type="journal article" date="2009" name="J. Bacteriol.">
        <title>Complete genome sequence and comparative genome analysis of enteropathogenic Escherichia coli O127:H6 strain E2348/69.</title>
        <authorList>
            <person name="Iguchi A."/>
            <person name="Thomson N.R."/>
            <person name="Ogura Y."/>
            <person name="Saunders D."/>
            <person name="Ooka T."/>
            <person name="Henderson I.R."/>
            <person name="Harris D."/>
            <person name="Asadulghani M."/>
            <person name="Kurokawa K."/>
            <person name="Dean P."/>
            <person name="Kenny B."/>
            <person name="Quail M.A."/>
            <person name="Thurston S."/>
            <person name="Dougan G."/>
            <person name="Hayashi T."/>
            <person name="Parkhill J."/>
            <person name="Frankel G."/>
        </authorList>
    </citation>
    <scope>NUCLEOTIDE SEQUENCE [LARGE SCALE GENOMIC DNA]</scope>
    <source>
        <strain>E2348/69 / EPEC</strain>
    </source>
</reference>
<accession>B7UJ69</accession>
<comment type="function">
    <text evidence="1">Catalyzes the conversion of glucosamine-6-phosphate to glucosamine-1-phosphate.</text>
</comment>
<comment type="catalytic activity">
    <reaction evidence="1">
        <text>alpha-D-glucosamine 1-phosphate = D-glucosamine 6-phosphate</text>
        <dbReference type="Rhea" id="RHEA:23424"/>
        <dbReference type="ChEBI" id="CHEBI:58516"/>
        <dbReference type="ChEBI" id="CHEBI:58725"/>
        <dbReference type="EC" id="5.4.2.10"/>
    </reaction>
</comment>
<comment type="cofactor">
    <cofactor evidence="1">
        <name>Mg(2+)</name>
        <dbReference type="ChEBI" id="CHEBI:18420"/>
    </cofactor>
    <text evidence="1">Binds 1 Mg(2+) ion per subunit.</text>
</comment>
<comment type="PTM">
    <text evidence="1">Activated by phosphorylation.</text>
</comment>
<comment type="similarity">
    <text evidence="1">Belongs to the phosphohexose mutase family.</text>
</comment>
<keyword id="KW-0413">Isomerase</keyword>
<keyword id="KW-0460">Magnesium</keyword>
<keyword id="KW-0479">Metal-binding</keyword>
<keyword id="KW-0597">Phosphoprotein</keyword>
<keyword id="KW-1185">Reference proteome</keyword>
<organism>
    <name type="scientific">Escherichia coli O127:H6 (strain E2348/69 / EPEC)</name>
    <dbReference type="NCBI Taxonomy" id="574521"/>
    <lineage>
        <taxon>Bacteria</taxon>
        <taxon>Pseudomonadati</taxon>
        <taxon>Pseudomonadota</taxon>
        <taxon>Gammaproteobacteria</taxon>
        <taxon>Enterobacterales</taxon>
        <taxon>Enterobacteriaceae</taxon>
        <taxon>Escherichia</taxon>
    </lineage>
</organism>
<evidence type="ECO:0000255" key="1">
    <source>
        <dbReference type="HAMAP-Rule" id="MF_01554"/>
    </source>
</evidence>
<feature type="chain" id="PRO_1000185366" description="Phosphoglucosamine mutase">
    <location>
        <begin position="1"/>
        <end position="445"/>
    </location>
</feature>
<feature type="active site" description="Phosphoserine intermediate" evidence="1">
    <location>
        <position position="102"/>
    </location>
</feature>
<feature type="binding site" description="via phosphate group" evidence="1">
    <location>
        <position position="102"/>
    </location>
    <ligand>
        <name>Mg(2+)</name>
        <dbReference type="ChEBI" id="CHEBI:18420"/>
    </ligand>
</feature>
<feature type="binding site" evidence="1">
    <location>
        <position position="241"/>
    </location>
    <ligand>
        <name>Mg(2+)</name>
        <dbReference type="ChEBI" id="CHEBI:18420"/>
    </ligand>
</feature>
<feature type="binding site" evidence="1">
    <location>
        <position position="243"/>
    </location>
    <ligand>
        <name>Mg(2+)</name>
        <dbReference type="ChEBI" id="CHEBI:18420"/>
    </ligand>
</feature>
<feature type="binding site" evidence="1">
    <location>
        <position position="245"/>
    </location>
    <ligand>
        <name>Mg(2+)</name>
        <dbReference type="ChEBI" id="CHEBI:18420"/>
    </ligand>
</feature>
<feature type="modified residue" description="Phosphoserine" evidence="1">
    <location>
        <position position="102"/>
    </location>
</feature>
<name>GLMM_ECO27</name>
<protein>
    <recommendedName>
        <fullName evidence="1">Phosphoglucosamine mutase</fullName>
        <ecNumber evidence="1">5.4.2.10</ecNumber>
    </recommendedName>
</protein>
<sequence length="445" mass="47517">MSNRKYFGTDGIRGRVGDAPITPDFVLKLGWAAGKVLARHGSRKIIIGKDTRISGYMLESALEAGLAAAGLSALFTGPMPTPAVAYLTRTFRAEAGIVISASHNPFYDNGIKFFSIDGTKLPDAVEEAIEAEMEKEISCVDSAELGKASRIVDAAGRYIEFCKATFPNELSLSELKIVVDCANGATYHIAPNVLRELGANVIAIGCEPNGVNINAEVGATDVRALQARVLAEKADLGIAFDGDGDRVIMVDHEGNKVDGDQIMYIIAREGLRQGQLRGGAVGTLMSNMGLELALKQLGIPFARAKVGDRYVLEKMQEKGWRIGAENSGHVILLDKTTTGDGIVAGLQVLAAMARNHMSLHDLCSGMKMFPQILVNVRYTAGSGDPLEHESVKAVTAEVEAALGSRGRVLLRKSGTEPLIRVMVEGEDEAQVTEFAHRIADAVKAV</sequence>
<proteinExistence type="inferred from homology"/>